<protein>
    <recommendedName>
        <fullName evidence="1">Peroxiredoxin 2</fullName>
        <ecNumber evidence="1">1.11.1.24</ecNumber>
    </recommendedName>
    <alternativeName>
        <fullName evidence="1">Thioredoxin-dependent peroxiredoxin 2</fullName>
    </alternativeName>
</protein>
<reference key="1">
    <citation type="submission" date="1997-06" db="EMBL/GenBank/DDBJ databases">
        <title>A second example of an ahpC/TSA homolog-encoding gene in S. metallicus.</title>
        <authorList>
            <person name="Burton N.P."/>
            <person name="Norris P.R."/>
        </authorList>
    </citation>
    <scope>NUCLEOTIDE SEQUENCE [GENOMIC DNA]</scope>
    <source>
        <strain>LM</strain>
    </source>
</reference>
<feature type="chain" id="PRO_0000135168" description="Peroxiredoxin 2">
    <location>
        <begin position="1"/>
        <end position="214"/>
    </location>
</feature>
<feature type="domain" description="Thioredoxin" evidence="1">
    <location>
        <begin position="1"/>
        <end position="157"/>
    </location>
</feature>
<feature type="active site" description="Cysteine sulfenic acid (-SOH) intermediate" evidence="1">
    <location>
        <position position="45"/>
    </location>
</feature>
<feature type="binding site" evidence="1">
    <location>
        <position position="120"/>
    </location>
    <ligand>
        <name>substrate</name>
    </ligand>
</feature>
<proteinExistence type="inferred from homology"/>
<comment type="function">
    <text evidence="1">Thiol-specific peroxidase that catalyzes the reduction of hydrogen peroxide and organic hydroperoxides to water and alcohols, respectively. Plays a role in cell protection against oxidative stress by detoxifying peroxides.</text>
</comment>
<comment type="catalytic activity">
    <reaction evidence="1">
        <text>a hydroperoxide + [thioredoxin]-dithiol = an alcohol + [thioredoxin]-disulfide + H2O</text>
        <dbReference type="Rhea" id="RHEA:62620"/>
        <dbReference type="Rhea" id="RHEA-COMP:10698"/>
        <dbReference type="Rhea" id="RHEA-COMP:10700"/>
        <dbReference type="ChEBI" id="CHEBI:15377"/>
        <dbReference type="ChEBI" id="CHEBI:29950"/>
        <dbReference type="ChEBI" id="CHEBI:30879"/>
        <dbReference type="ChEBI" id="CHEBI:35924"/>
        <dbReference type="ChEBI" id="CHEBI:50058"/>
        <dbReference type="EC" id="1.11.1.24"/>
    </reaction>
</comment>
<comment type="subunit">
    <text evidence="1">Homodecamer. Pentamer of dimers that assemble into a ring structure.</text>
</comment>
<comment type="subcellular location">
    <subcellularLocation>
        <location evidence="1">Cytoplasm</location>
    </subcellularLocation>
</comment>
<comment type="miscellaneous">
    <text evidence="1">The active site is a conserved redox-active cysteine residue, the peroxidatic cysteine (C(P)), which makes the nucleophilic attack on the peroxide substrate. The peroxide oxidizes the C(P)-SH to cysteine sulfenic acid (C(P)-SOH), which then reacts with another cysteine residue, the resolving cysteine (C(R)), to form a disulfide bridge. The disulfide is subsequently reduced by an appropriate electron donor to complete the catalytic cycle. In this 1-Cys peroxiredoxin, no C(R) is present and C(P) instead forms a disulfide with a cysteine from another protein or with a small thiol molecule.</text>
</comment>
<comment type="similarity">
    <text evidence="1">Belongs to the peroxiredoxin family. Prx6 subfamily.</text>
</comment>
<organism>
    <name type="scientific">Sulfuracidifex metallicus</name>
    <name type="common">Sulfolobus metallicus</name>
    <dbReference type="NCBI Taxonomy" id="47303"/>
    <lineage>
        <taxon>Archaea</taxon>
        <taxon>Thermoproteota</taxon>
        <taxon>Thermoprotei</taxon>
        <taxon>Sulfolobales</taxon>
        <taxon>Sulfolobaceae</taxon>
        <taxon>Sulfuracidifex</taxon>
    </lineage>
</organism>
<keyword id="KW-0049">Antioxidant</keyword>
<keyword id="KW-0963">Cytoplasm</keyword>
<keyword id="KW-0560">Oxidoreductase</keyword>
<keyword id="KW-0575">Peroxidase</keyword>
<keyword id="KW-0676">Redox-active center</keyword>
<accession>O33665</accession>
<sequence length="214" mass="24510">MKLYQKFPETQVLTTQGVIDFYKDIFGKGKWLFLFAHPADFTPVCTTEFVEFSKAYNDFANLGVQLVGLSVDSVYSHIEWLKDIQEKYGIKVPFPVIADPDKKFARLLDIVDEASGQTIRGVFLVSPDGVIRFIAYYPLEAGRKISELLRITKAMIVNYKAKVVLPANWEPGQDVIVPPPNVFDEATMRMKMPKAKSWYLLFKDYNELPQDQKV</sequence>
<name>TDXH2_SULME</name>
<evidence type="ECO:0000255" key="1">
    <source>
        <dbReference type="HAMAP-Rule" id="MF_00401"/>
    </source>
</evidence>
<dbReference type="EC" id="1.11.1.24" evidence="1"/>
<dbReference type="EMBL" id="AF007757">
    <property type="protein sequence ID" value="AAB63198.1"/>
    <property type="molecule type" value="Genomic_DNA"/>
</dbReference>
<dbReference type="SMR" id="O33665"/>
<dbReference type="GO" id="GO:0005829">
    <property type="term" value="C:cytosol"/>
    <property type="evidence" value="ECO:0007669"/>
    <property type="project" value="TreeGrafter"/>
</dbReference>
<dbReference type="GO" id="GO:0008379">
    <property type="term" value="F:thioredoxin peroxidase activity"/>
    <property type="evidence" value="ECO:0007669"/>
    <property type="project" value="TreeGrafter"/>
</dbReference>
<dbReference type="GO" id="GO:0045454">
    <property type="term" value="P:cell redox homeostasis"/>
    <property type="evidence" value="ECO:0007669"/>
    <property type="project" value="TreeGrafter"/>
</dbReference>
<dbReference type="GO" id="GO:0033554">
    <property type="term" value="P:cellular response to stress"/>
    <property type="evidence" value="ECO:0007669"/>
    <property type="project" value="TreeGrafter"/>
</dbReference>
<dbReference type="GO" id="GO:0042744">
    <property type="term" value="P:hydrogen peroxide catabolic process"/>
    <property type="evidence" value="ECO:0007669"/>
    <property type="project" value="TreeGrafter"/>
</dbReference>
<dbReference type="GO" id="GO:0006979">
    <property type="term" value="P:response to oxidative stress"/>
    <property type="evidence" value="ECO:0007669"/>
    <property type="project" value="TreeGrafter"/>
</dbReference>
<dbReference type="Gene3D" id="3.30.1020.10">
    <property type="entry name" value="Antioxidant, Horf6, Chain A, domain2"/>
    <property type="match status" value="1"/>
</dbReference>
<dbReference type="Gene3D" id="3.40.30.10">
    <property type="entry name" value="Glutaredoxin"/>
    <property type="match status" value="1"/>
</dbReference>
<dbReference type="HAMAP" id="MF_00401">
    <property type="entry name" value="Peroxiredoxin"/>
    <property type="match status" value="1"/>
</dbReference>
<dbReference type="InterPro" id="IPR000866">
    <property type="entry name" value="AhpC/TSA"/>
</dbReference>
<dbReference type="InterPro" id="IPR050217">
    <property type="entry name" value="Peroxiredoxin"/>
</dbReference>
<dbReference type="InterPro" id="IPR024706">
    <property type="entry name" value="Peroxiredoxin_AhpC-typ"/>
</dbReference>
<dbReference type="InterPro" id="IPR019479">
    <property type="entry name" value="Peroxiredoxin_C"/>
</dbReference>
<dbReference type="InterPro" id="IPR022915">
    <property type="entry name" value="Peroxiredoxin_TDXH"/>
</dbReference>
<dbReference type="InterPro" id="IPR036249">
    <property type="entry name" value="Thioredoxin-like_sf"/>
</dbReference>
<dbReference type="InterPro" id="IPR013766">
    <property type="entry name" value="Thioredoxin_domain"/>
</dbReference>
<dbReference type="NCBIfam" id="NF009668">
    <property type="entry name" value="PRK13189.1"/>
    <property type="match status" value="1"/>
</dbReference>
<dbReference type="NCBIfam" id="NF009669">
    <property type="entry name" value="PRK13190.1"/>
    <property type="match status" value="1"/>
</dbReference>
<dbReference type="PANTHER" id="PTHR10681:SF121">
    <property type="entry name" value="ALKYL HYDROPEROXIDE REDUCTASE C"/>
    <property type="match status" value="1"/>
</dbReference>
<dbReference type="PANTHER" id="PTHR10681">
    <property type="entry name" value="THIOREDOXIN PEROXIDASE"/>
    <property type="match status" value="1"/>
</dbReference>
<dbReference type="Pfam" id="PF10417">
    <property type="entry name" value="1-cysPrx_C"/>
    <property type="match status" value="1"/>
</dbReference>
<dbReference type="Pfam" id="PF00578">
    <property type="entry name" value="AhpC-TSA"/>
    <property type="match status" value="1"/>
</dbReference>
<dbReference type="PIRSF" id="PIRSF000239">
    <property type="entry name" value="AHPC"/>
    <property type="match status" value="1"/>
</dbReference>
<dbReference type="SUPFAM" id="SSF52833">
    <property type="entry name" value="Thioredoxin-like"/>
    <property type="match status" value="1"/>
</dbReference>
<dbReference type="PROSITE" id="PS51352">
    <property type="entry name" value="THIOREDOXIN_2"/>
    <property type="match status" value="1"/>
</dbReference>